<comment type="function">
    <text evidence="1">Probably functions as a manganese efflux pump.</text>
</comment>
<comment type="subcellular location">
    <subcellularLocation>
        <location evidence="1">Cell inner membrane</location>
        <topology evidence="1">Multi-pass membrane protein</topology>
    </subcellularLocation>
</comment>
<comment type="similarity">
    <text evidence="1">Belongs to the MntP (TC 9.B.29) family.</text>
</comment>
<reference key="1">
    <citation type="journal article" date="2005" name="Science">
        <title>Extensive DNA inversions in the B. fragilis genome control variable gene expression.</title>
        <authorList>
            <person name="Cerdeno-Tarraga A.-M."/>
            <person name="Patrick S."/>
            <person name="Crossman L.C."/>
            <person name="Blakely G."/>
            <person name="Abratt V."/>
            <person name="Lennard N."/>
            <person name="Poxton I."/>
            <person name="Duerden B."/>
            <person name="Harris B."/>
            <person name="Quail M.A."/>
            <person name="Barron A."/>
            <person name="Clark L."/>
            <person name="Corton C."/>
            <person name="Doggett J."/>
            <person name="Holden M.T.G."/>
            <person name="Larke N."/>
            <person name="Line A."/>
            <person name="Lord A."/>
            <person name="Norbertczak H."/>
            <person name="Ormond D."/>
            <person name="Price C."/>
            <person name="Rabbinowitsch E."/>
            <person name="Woodward J."/>
            <person name="Barrell B.G."/>
            <person name="Parkhill J."/>
        </authorList>
    </citation>
    <scope>NUCLEOTIDE SEQUENCE [LARGE SCALE GENOMIC DNA]</scope>
    <source>
        <strain>ATCC 25285 / DSM 2151 / CCUG 4856 / JCM 11019 / LMG 10263 / NCTC 9343 / Onslow / VPI 2553 / EN-2</strain>
    </source>
</reference>
<name>MNTP_BACFN</name>
<keyword id="KW-0997">Cell inner membrane</keyword>
<keyword id="KW-1003">Cell membrane</keyword>
<keyword id="KW-0406">Ion transport</keyword>
<keyword id="KW-0464">Manganese</keyword>
<keyword id="KW-0472">Membrane</keyword>
<keyword id="KW-0812">Transmembrane</keyword>
<keyword id="KW-1133">Transmembrane helix</keyword>
<keyword id="KW-0813">Transport</keyword>
<organism>
    <name type="scientific">Bacteroides fragilis (strain ATCC 25285 / DSM 2151 / CCUG 4856 / JCM 11019 / LMG 10263 / NCTC 9343 / Onslow / VPI 2553 / EN-2)</name>
    <dbReference type="NCBI Taxonomy" id="272559"/>
    <lineage>
        <taxon>Bacteria</taxon>
        <taxon>Pseudomonadati</taxon>
        <taxon>Bacteroidota</taxon>
        <taxon>Bacteroidia</taxon>
        <taxon>Bacteroidales</taxon>
        <taxon>Bacteroidaceae</taxon>
        <taxon>Bacteroides</taxon>
    </lineage>
</organism>
<sequence>MTGLEIWLLAIGLAMDCLAVSIASGIILRRIQWRPMLIMAFFFGLFQAIMPLLGWLGASTFSHLIESVDHWIAFAILAFLGGRMIKESFKEEDCCQRFNPASLKVVITMAVATSIDALAVGVSFAFLGIKSCSSILYPAGIIGFVSFFMSLIGLIFGIRFGCGIARKLRAELWGGIILILIGTKILIEHLFFNN</sequence>
<evidence type="ECO:0000255" key="1">
    <source>
        <dbReference type="HAMAP-Rule" id="MF_01521"/>
    </source>
</evidence>
<accession>Q5LG69</accession>
<dbReference type="EMBL" id="CR626927">
    <property type="protein sequence ID" value="CAH06872.1"/>
    <property type="molecule type" value="Genomic_DNA"/>
</dbReference>
<dbReference type="RefSeq" id="WP_005785730.1">
    <property type="nucleotide sequence ID" value="NZ_UFTH01000001.1"/>
</dbReference>
<dbReference type="PaxDb" id="272559-BF9343_1091"/>
<dbReference type="KEGG" id="bfs:BF9343_1091"/>
<dbReference type="eggNOG" id="COG1971">
    <property type="taxonomic scope" value="Bacteria"/>
</dbReference>
<dbReference type="HOGENOM" id="CLU_096410_3_0_10"/>
<dbReference type="Proteomes" id="UP000006731">
    <property type="component" value="Chromosome"/>
</dbReference>
<dbReference type="GO" id="GO:0005886">
    <property type="term" value="C:plasma membrane"/>
    <property type="evidence" value="ECO:0007669"/>
    <property type="project" value="UniProtKB-SubCell"/>
</dbReference>
<dbReference type="GO" id="GO:0005384">
    <property type="term" value="F:manganese ion transmembrane transporter activity"/>
    <property type="evidence" value="ECO:0007669"/>
    <property type="project" value="UniProtKB-UniRule"/>
</dbReference>
<dbReference type="HAMAP" id="MF_01521">
    <property type="entry name" value="MntP_pump"/>
    <property type="match status" value="1"/>
</dbReference>
<dbReference type="InterPro" id="IPR003810">
    <property type="entry name" value="Mntp/YtaF"/>
</dbReference>
<dbReference type="InterPro" id="IPR022929">
    <property type="entry name" value="Put_MntP"/>
</dbReference>
<dbReference type="PANTHER" id="PTHR35529">
    <property type="entry name" value="MANGANESE EFFLUX PUMP MNTP-RELATED"/>
    <property type="match status" value="1"/>
</dbReference>
<dbReference type="PANTHER" id="PTHR35529:SF1">
    <property type="entry name" value="MANGANESE EFFLUX PUMP MNTP-RELATED"/>
    <property type="match status" value="1"/>
</dbReference>
<dbReference type="Pfam" id="PF02659">
    <property type="entry name" value="Mntp"/>
    <property type="match status" value="1"/>
</dbReference>
<feature type="chain" id="PRO_0000155631" description="Putative manganese efflux pump MntP">
    <location>
        <begin position="1"/>
        <end position="194"/>
    </location>
</feature>
<feature type="transmembrane region" description="Helical" evidence="1">
    <location>
        <begin position="8"/>
        <end position="28"/>
    </location>
</feature>
<feature type="transmembrane region" description="Helical" evidence="1">
    <location>
        <begin position="36"/>
        <end position="56"/>
    </location>
</feature>
<feature type="transmembrane region" description="Helical" evidence="1">
    <location>
        <begin position="61"/>
        <end position="81"/>
    </location>
</feature>
<feature type="transmembrane region" description="Helical" evidence="1">
    <location>
        <begin position="109"/>
        <end position="129"/>
    </location>
</feature>
<feature type="transmembrane region" description="Helical" evidence="1">
    <location>
        <begin position="138"/>
        <end position="158"/>
    </location>
</feature>
<feature type="transmembrane region" description="Helical" evidence="1">
    <location>
        <begin position="172"/>
        <end position="192"/>
    </location>
</feature>
<gene>
    <name evidence="1" type="primary">mntP</name>
    <name type="ordered locus">BF1149</name>
</gene>
<protein>
    <recommendedName>
        <fullName evidence="1">Putative manganese efflux pump MntP</fullName>
    </recommendedName>
</protein>
<proteinExistence type="inferred from homology"/>